<reference key="1">
    <citation type="journal article" date="2016" name="Nature">
        <title>Genome evolution in the allotetraploid frog Xenopus laevis.</title>
        <authorList>
            <person name="Session A.M."/>
            <person name="Uno Y."/>
            <person name="Kwon T."/>
            <person name="Chapman J.A."/>
            <person name="Toyoda A."/>
            <person name="Takahashi S."/>
            <person name="Fukui A."/>
            <person name="Hikosaka A."/>
            <person name="Suzuki A."/>
            <person name="Kondo M."/>
            <person name="van Heeringen S.J."/>
            <person name="Quigley I."/>
            <person name="Heinz S."/>
            <person name="Ogino H."/>
            <person name="Ochi H."/>
            <person name="Hellsten U."/>
            <person name="Lyons J.B."/>
            <person name="Simakov O."/>
            <person name="Putnam N."/>
            <person name="Stites J."/>
            <person name="Kuroki Y."/>
            <person name="Tanaka T."/>
            <person name="Michiue T."/>
            <person name="Watanabe M."/>
            <person name="Bogdanovic O."/>
            <person name="Lister R."/>
            <person name="Georgiou G."/>
            <person name="Paranjpe S.S."/>
            <person name="van Kruijsbergen I."/>
            <person name="Shu S."/>
            <person name="Carlson J."/>
            <person name="Kinoshita T."/>
            <person name="Ohta Y."/>
            <person name="Mawaribuchi S."/>
            <person name="Jenkins J."/>
            <person name="Grimwood J."/>
            <person name="Schmutz J."/>
            <person name="Mitros T."/>
            <person name="Mozaffari S.V."/>
            <person name="Suzuki Y."/>
            <person name="Haramoto Y."/>
            <person name="Yamamoto T.S."/>
            <person name="Takagi C."/>
            <person name="Heald R."/>
            <person name="Miller K."/>
            <person name="Haudenschild C."/>
            <person name="Kitzman J."/>
            <person name="Nakayama T."/>
            <person name="Izutsu Y."/>
            <person name="Robert J."/>
            <person name="Fortriede J."/>
            <person name="Burns K."/>
            <person name="Lotay V."/>
            <person name="Karimi K."/>
            <person name="Yasuoka Y."/>
            <person name="Dichmann D.S."/>
            <person name="Flajnik M.F."/>
            <person name="Houston D.W."/>
            <person name="Shendure J."/>
            <person name="DuPasquier L."/>
            <person name="Vize P.D."/>
            <person name="Zorn A.M."/>
            <person name="Ito M."/>
            <person name="Marcotte E.M."/>
            <person name="Wallingford J.B."/>
            <person name="Ito Y."/>
            <person name="Asashima M."/>
            <person name="Ueno N."/>
            <person name="Matsuda Y."/>
            <person name="Veenstra G.J."/>
            <person name="Fujiyama A."/>
            <person name="Harland R.M."/>
            <person name="Taira M."/>
            <person name="Rokhsar D.S."/>
        </authorList>
    </citation>
    <scope>NUCLEOTIDE SEQUENCE [LARGE SCALE GENOMIC DNA]</scope>
    <source>
        <strain>J</strain>
    </source>
</reference>
<reference key="2">
    <citation type="journal article" date="2013" name="Biochim. Biophys. Acta">
        <title>Zar1 represses translation in Xenopus oocytes and binds to the TCS in maternal mRNAs with different characteristics than Zar2.</title>
        <authorList>
            <person name="Yamamoto T.M."/>
            <person name="Cook J.M."/>
            <person name="Kotter C.V."/>
            <person name="Khat T."/>
            <person name="Silva K.D."/>
            <person name="Ferreyros M."/>
            <person name="Holt J.W."/>
            <person name="Knight J.D."/>
            <person name="Charlesworth A."/>
        </authorList>
    </citation>
    <scope>TISSUE SPECIFICITY</scope>
    <scope>DEVELOPMENTAL STAGE</scope>
</reference>
<gene>
    <name evidence="8" type="primary">zar1.L</name>
</gene>
<protein>
    <recommendedName>
        <fullName evidence="7">Zygote arrest protein 1.L</fullName>
    </recommendedName>
</protein>
<sequence>MASFSEEAMDSYMYPAYNPYSYRYMTPKNKGMSWRQKNYLASYGDTGDYYDNYQRAQLKAILSQVNPNLTPRLRKANTRDVGVQVNPRQDASVQCSLGPRTLLRRRPGALRKPQQSPPEQGSPASPTKTVRFPRTIAVYSPVAAGRLAPFQDKGENLSEKTEALRSEGSRGEGGRPEGKQEDGEIKEQTKMDKADQEEVAPDQTRPKFQFLEQKYGYYHCKDCNIRWESAYVWCVQGTNKVYFKQFCRTCQKSYNPYRVEDIMCQSCKQTRCMCPVKLRHVDPKRPHRQDLCGRCKGKRLSCDSTFSFKYII</sequence>
<evidence type="ECO:0000250" key="1">
    <source>
        <dbReference type="UniProtKB" id="C3VD30"/>
    </source>
</evidence>
<evidence type="ECO:0000250" key="2">
    <source>
        <dbReference type="UniProtKB" id="Q7T3U0"/>
    </source>
</evidence>
<evidence type="ECO:0000250" key="3">
    <source>
        <dbReference type="UniProtKB" id="Q80SU3"/>
    </source>
</evidence>
<evidence type="ECO:0000255" key="4"/>
<evidence type="ECO:0000256" key="5">
    <source>
        <dbReference type="SAM" id="MobiDB-lite"/>
    </source>
</evidence>
<evidence type="ECO:0000269" key="6">
    <source>
    </source>
</evidence>
<evidence type="ECO:0000305" key="7"/>
<evidence type="ECO:0000312" key="8">
    <source>
        <dbReference type="Xenbase" id="XB-GENE-17331915"/>
    </source>
</evidence>
<organism>
    <name type="scientific">Xenopus laevis</name>
    <name type="common">African clawed frog</name>
    <dbReference type="NCBI Taxonomy" id="8355"/>
    <lineage>
        <taxon>Eukaryota</taxon>
        <taxon>Metazoa</taxon>
        <taxon>Chordata</taxon>
        <taxon>Craniata</taxon>
        <taxon>Vertebrata</taxon>
        <taxon>Euteleostomi</taxon>
        <taxon>Amphibia</taxon>
        <taxon>Batrachia</taxon>
        <taxon>Anura</taxon>
        <taxon>Pipoidea</taxon>
        <taxon>Pipidae</taxon>
        <taxon>Xenopodinae</taxon>
        <taxon>Xenopus</taxon>
        <taxon>Xenopus</taxon>
    </lineage>
</organism>
<feature type="chain" id="PRO_0000457517" description="Zygote arrest protein 1.L">
    <location>
        <begin position="1"/>
        <end position="312"/>
    </location>
</feature>
<feature type="zinc finger region" description="3CxxC-type" evidence="4">
    <location>
        <begin position="214"/>
        <end position="297"/>
    </location>
</feature>
<feature type="region of interest" description="Disordered" evidence="5">
    <location>
        <begin position="79"/>
        <end position="133"/>
    </location>
</feature>
<feature type="region of interest" description="Disordered" evidence="5">
    <location>
        <begin position="150"/>
        <end position="205"/>
    </location>
</feature>
<feature type="compositionally biased region" description="Polar residues" evidence="5">
    <location>
        <begin position="86"/>
        <end position="95"/>
    </location>
</feature>
<feature type="compositionally biased region" description="Polar residues" evidence="5">
    <location>
        <begin position="113"/>
        <end position="128"/>
    </location>
</feature>
<feature type="compositionally biased region" description="Basic and acidic residues" evidence="5">
    <location>
        <begin position="152"/>
        <end position="196"/>
    </location>
</feature>
<name>ZAR1L_XENLA</name>
<dbReference type="EMBL" id="CM004466">
    <property type="status" value="NOT_ANNOTATED_CDS"/>
    <property type="molecule type" value="Genomic_DNA"/>
</dbReference>
<dbReference type="RefSeq" id="XP_018085203.1">
    <property type="nucleotide sequence ID" value="XM_018229714.2"/>
</dbReference>
<dbReference type="STRING" id="8355.A0A1L8HTT5"/>
<dbReference type="PaxDb" id="8355-A0A1L8HTT5"/>
<dbReference type="GeneID" id="108698314"/>
<dbReference type="KEGG" id="xla:108698314"/>
<dbReference type="AGR" id="Xenbase:XB-GENE-17331915"/>
<dbReference type="CTD" id="108698314"/>
<dbReference type="Xenbase" id="XB-GENE-17331915">
    <property type="gene designation" value="zar1.L"/>
</dbReference>
<dbReference type="OMA" id="CSCAVTQ"/>
<dbReference type="OrthoDB" id="9885288at2759"/>
<dbReference type="Proteomes" id="UP000186698">
    <property type="component" value="Chromosome 1L"/>
</dbReference>
<dbReference type="Proteomes" id="UP000694892">
    <property type="component" value="Chromosome 1L"/>
</dbReference>
<dbReference type="Bgee" id="108698314">
    <property type="expression patterns" value="Expressed in ovary and 6 other cell types or tissues"/>
</dbReference>
<dbReference type="GO" id="GO:0005737">
    <property type="term" value="C:cytoplasm"/>
    <property type="evidence" value="ECO:0000318"/>
    <property type="project" value="GO_Central"/>
</dbReference>
<dbReference type="GO" id="GO:0036464">
    <property type="term" value="C:cytoplasmic ribonucleoprotein granule"/>
    <property type="evidence" value="ECO:0007669"/>
    <property type="project" value="UniProtKB-SubCell"/>
</dbReference>
<dbReference type="GO" id="GO:0003729">
    <property type="term" value="F:mRNA binding"/>
    <property type="evidence" value="ECO:0007669"/>
    <property type="project" value="UniProtKB-ARBA"/>
</dbReference>
<dbReference type="GO" id="GO:0008270">
    <property type="term" value="F:zinc ion binding"/>
    <property type="evidence" value="ECO:0007669"/>
    <property type="project" value="UniProtKB-KW"/>
</dbReference>
<dbReference type="GO" id="GO:0017148">
    <property type="term" value="P:negative regulation of translation"/>
    <property type="evidence" value="ECO:0007669"/>
    <property type="project" value="UniProtKB-ARBA"/>
</dbReference>
<dbReference type="GO" id="GO:0048477">
    <property type="term" value="P:oogenesis"/>
    <property type="evidence" value="ECO:0007669"/>
    <property type="project" value="UniProtKB-KW"/>
</dbReference>
<dbReference type="GO" id="GO:0006412">
    <property type="term" value="P:translation"/>
    <property type="evidence" value="ECO:0000318"/>
    <property type="project" value="GO_Central"/>
</dbReference>
<dbReference type="InterPro" id="IPR026775">
    <property type="entry name" value="Zar1"/>
</dbReference>
<dbReference type="InterPro" id="IPR027377">
    <property type="entry name" value="ZAR1/RTP1-5-like_Znf-3CxxC"/>
</dbReference>
<dbReference type="PANTHER" id="PTHR31054:SF6">
    <property type="entry name" value="ZYGOTE ARREST PROTEIN 1"/>
    <property type="match status" value="1"/>
</dbReference>
<dbReference type="PANTHER" id="PTHR31054">
    <property type="entry name" value="ZYGOTE ARREST PROTEIN 1-LIKE ISOFORM X1"/>
    <property type="match status" value="1"/>
</dbReference>
<dbReference type="Pfam" id="PF13695">
    <property type="entry name" value="Zn_ribbon_3CxxC"/>
    <property type="match status" value="1"/>
</dbReference>
<dbReference type="SMART" id="SM01328">
    <property type="entry name" value="zf-3CxxC"/>
    <property type="match status" value="1"/>
</dbReference>
<accession>A0A1L8HTT5</accession>
<keyword id="KW-0963">Cytoplasm</keyword>
<keyword id="KW-0217">Developmental protein</keyword>
<keyword id="KW-0221">Differentiation</keyword>
<keyword id="KW-0479">Metal-binding</keyword>
<keyword id="KW-0896">Oogenesis</keyword>
<keyword id="KW-1185">Reference proteome</keyword>
<keyword id="KW-0694">RNA-binding</keyword>
<keyword id="KW-0862">Zinc</keyword>
<keyword id="KW-0863">Zinc-finger</keyword>
<comment type="function">
    <text evidence="2 3">mRNA-binding protein required for maternal mRNA storage, translation and degradation during oocyte maturation (By similarity). Probably promotes formation of some phase-separated membraneless compartment that stores maternal mRNAs in oocytes: acts by undergoing liquid-liquid phase separation upon binding to maternal mRNAs (By similarity). Binds to the 3'-UTR of maternal mRNAs in immature oocytes, inhibiting their translation (By similarity).</text>
</comment>
<comment type="subcellular location">
    <subcellularLocation>
        <location evidence="1">Cytoplasm</location>
        <location evidence="1">Cytoplasmic ribonucleoprotein granule</location>
    </subcellularLocation>
</comment>
<comment type="tissue specificity">
    <text evidence="6">Ovary.</text>
</comment>
<comment type="developmental stage">
    <text evidence="6">Expressed during oocyte maturation: reaches maximum levels at stages I-III and then declined through stages IV to VI (PubMed:23827238). During oocyte maturation, levels remain constant (PubMed:23827238).</text>
</comment>
<comment type="domain">
    <text evidence="3">Disordered regions undergo liquid-liquid phase separation (LLPS) for the formation of membraneless compartments that store maternal mRNAs in oocytes.</text>
</comment>
<comment type="domain">
    <text evidence="2">The 3CxxC-type mediates binding to the 3'-UTR of mRNAs.</text>
</comment>
<comment type="similarity">
    <text evidence="7">Belongs to the ZAR1 family.</text>
</comment>
<proteinExistence type="evidence at transcript level"/>